<organism>
    <name type="scientific">Homo sapiens</name>
    <name type="common">Human</name>
    <dbReference type="NCBI Taxonomy" id="9606"/>
    <lineage>
        <taxon>Eukaryota</taxon>
        <taxon>Metazoa</taxon>
        <taxon>Chordata</taxon>
        <taxon>Craniata</taxon>
        <taxon>Vertebrata</taxon>
        <taxon>Euteleostomi</taxon>
        <taxon>Mammalia</taxon>
        <taxon>Eutheria</taxon>
        <taxon>Euarchontoglires</taxon>
        <taxon>Primates</taxon>
        <taxon>Haplorrhini</taxon>
        <taxon>Catarrhini</taxon>
        <taxon>Hominidae</taxon>
        <taxon>Homo</taxon>
    </lineage>
</organism>
<evidence type="ECO:0000250" key="1"/>
<evidence type="ECO:0000250" key="2">
    <source>
        <dbReference type="UniProtKB" id="Q91WE1"/>
    </source>
</evidence>
<evidence type="ECO:0000255" key="3">
    <source>
        <dbReference type="PROSITE-ProRule" id="PRU00147"/>
    </source>
</evidence>
<evidence type="ECO:0000256" key="4">
    <source>
        <dbReference type="SAM" id="MobiDB-lite"/>
    </source>
</evidence>
<evidence type="ECO:0000269" key="5">
    <source>
    </source>
</evidence>
<evidence type="ECO:0000303" key="6">
    <source>
    </source>
</evidence>
<evidence type="ECO:0000305" key="7"/>
<evidence type="ECO:0007744" key="8">
    <source>
    </source>
</evidence>
<evidence type="ECO:0007744" key="9">
    <source>
    </source>
</evidence>
<evidence type="ECO:0007829" key="10">
    <source>
        <dbReference type="PDB" id="6ECM"/>
    </source>
</evidence>
<keyword id="KW-0002">3D-structure</keyword>
<keyword id="KW-0025">Alternative splicing</keyword>
<keyword id="KW-0963">Cytoplasm</keyword>
<keyword id="KW-0968">Cytoplasmic vesicle</keyword>
<keyword id="KW-0446">Lipid-binding</keyword>
<keyword id="KW-0472">Membrane</keyword>
<keyword id="KW-0488">Methylation</keyword>
<keyword id="KW-0597">Phosphoprotein</keyword>
<keyword id="KW-0653">Protein transport</keyword>
<keyword id="KW-1267">Proteomics identification</keyword>
<keyword id="KW-1185">Reference proteome</keyword>
<keyword id="KW-0813">Transport</keyword>
<proteinExistence type="evidence at protein level"/>
<feature type="chain" id="PRO_0000213862" description="Sorting nexin-15">
    <location>
        <begin position="1"/>
        <end position="342"/>
    </location>
</feature>
<feature type="domain" description="PX" evidence="3">
    <location>
        <begin position="1"/>
        <end position="130"/>
    </location>
</feature>
<feature type="domain" description="MIT">
    <location>
        <begin position="265"/>
        <end position="342"/>
    </location>
</feature>
<feature type="region of interest" description="Disordered" evidence="4">
    <location>
        <begin position="245"/>
        <end position="267"/>
    </location>
</feature>
<feature type="binding site" evidence="1">
    <location>
        <position position="51"/>
    </location>
    <ligand>
        <name>a 1,2-diacyl-sn-glycero-3-phospho-(1D-myo-inositol-3-phosphate)</name>
        <dbReference type="ChEBI" id="CHEBI:58088"/>
    </ligand>
</feature>
<feature type="binding site" evidence="1">
    <location>
        <position position="53"/>
    </location>
    <ligand>
        <name>a 1,2-diacyl-sn-glycero-3-phospho-(1D-myo-inositol-3-phosphate)</name>
        <dbReference type="ChEBI" id="CHEBI:58088"/>
    </ligand>
</feature>
<feature type="binding site" evidence="1">
    <location>
        <position position="87"/>
    </location>
    <ligand>
        <name>a 1,2-diacyl-sn-glycero-3-phospho-(1D-myo-inositol-3-phosphate)</name>
        <dbReference type="ChEBI" id="CHEBI:58088"/>
    </ligand>
</feature>
<feature type="binding site" evidence="1">
    <location>
        <position position="96"/>
    </location>
    <ligand>
        <name>a 1,2-diacyl-sn-glycero-3-phospho-(1D-myo-inositol-3-phosphate)</name>
        <dbReference type="ChEBI" id="CHEBI:58088"/>
    </ligand>
</feature>
<feature type="modified residue" description="Omega-N-methylarginine" evidence="2">
    <location>
        <position position="105"/>
    </location>
</feature>
<feature type="modified residue" description="Phosphoserine" evidence="9">
    <location>
        <position position="201"/>
    </location>
</feature>
<feature type="modified residue" description="Phosphoserine" evidence="8 9">
    <location>
        <position position="227"/>
    </location>
</feature>
<feature type="splice variant" id="VSP_006193" description="In isoform 2." evidence="6">
    <original>EGAAPSPTHVAELATMEVESARLDQEPWEPGGQEEEEDGEGGPTPAYLSQATELITQALRDEKAGAYAAALQGYRDGVHVLLQGVPS</original>
    <variation>G</variation>
    <location>
        <begin position="222"/>
        <end position="308"/>
    </location>
</feature>
<feature type="sequence variant" id="VAR_052478" description="In dbSNP:rs495820.">
    <original>R</original>
    <variation>C</variation>
    <location>
        <position position="334"/>
    </location>
</feature>
<feature type="sequence conflict" description="In Ref. 1; AAF89956." evidence="7" ref="1">
    <location>
        <position position="221"/>
    </location>
</feature>
<feature type="strand" evidence="10">
    <location>
        <begin position="11"/>
        <end position="20"/>
    </location>
</feature>
<feature type="strand" evidence="10">
    <location>
        <begin position="26"/>
        <end position="34"/>
    </location>
</feature>
<feature type="strand" evidence="10">
    <location>
        <begin position="44"/>
        <end position="50"/>
    </location>
</feature>
<feature type="helix" evidence="10">
    <location>
        <begin position="52"/>
        <end position="73"/>
    </location>
</feature>
<feature type="helix" evidence="10">
    <location>
        <begin position="92"/>
        <end position="105"/>
    </location>
</feature>
<feature type="turn" evidence="10">
    <location>
        <begin position="106"/>
        <end position="109"/>
    </location>
</feature>
<feature type="helix" evidence="10">
    <location>
        <begin position="111"/>
        <end position="114"/>
    </location>
</feature>
<feature type="helix" evidence="10">
    <location>
        <begin position="117"/>
        <end position="121"/>
    </location>
</feature>
<comment type="function">
    <text evidence="5">May be involved in several stages of intracellular trafficking. Overexpression of SNX15 disrupts the normal trafficking of proteins from the plasma membrane to recycling endosomes or the TGN.</text>
</comment>
<comment type="subunit">
    <text evidence="5">Homodimer. Interacts with SNX1, SNX2 and SNX4.</text>
</comment>
<comment type="interaction">
    <interactant intactId="EBI-725924">
        <id>Q9NRS6</id>
    </interactant>
    <interactant intactId="EBI-714543">
        <id>Q15041</id>
        <label>ARL6IP1</label>
    </interactant>
    <organismsDiffer>false</organismsDiffer>
    <experiments>4</experiments>
</comment>
<comment type="interaction">
    <interactant intactId="EBI-725924">
        <id>Q9NRS6</id>
    </interactant>
    <interactant intactId="EBI-742084">
        <id>P49902</id>
        <label>NT5C2</label>
    </interactant>
    <organismsDiffer>false</organismsDiffer>
    <experiments>2</experiments>
</comment>
<comment type="interaction">
    <interactant intactId="EBI-725924">
        <id>Q9NRS6</id>
    </interactant>
    <interactant intactId="EBI-712367">
        <id>Q9UI14</id>
        <label>RABAC1</label>
    </interactant>
    <organismsDiffer>false</organismsDiffer>
    <experiments>4</experiments>
</comment>
<comment type="interaction">
    <interactant intactId="EBI-725924">
        <id>Q9NRS6</id>
    </interactant>
    <interactant intactId="EBI-750345">
        <id>Q96HR9</id>
        <label>REEP6</label>
    </interactant>
    <organismsDiffer>false</organismsDiffer>
    <experiments>5</experiments>
</comment>
<comment type="interaction">
    <interactant intactId="EBI-725924">
        <id>Q9NRS6</id>
    </interactant>
    <interactant intactId="EBI-14065960">
        <id>Q96HR9-2</id>
        <label>REEP6</label>
    </interactant>
    <organismsDiffer>false</organismsDiffer>
    <experiments>3</experiments>
</comment>
<comment type="interaction">
    <interactant intactId="EBI-725924">
        <id>Q9NRS6</id>
    </interactant>
    <interactant intactId="EBI-715945">
        <id>Q9NQC3</id>
        <label>RTN4</label>
    </interactant>
    <organismsDiffer>false</organismsDiffer>
    <experiments>4</experiments>
</comment>
<comment type="subcellular location">
    <subcellularLocation>
        <location evidence="5">Cytoplasm</location>
    </subcellularLocation>
    <subcellularLocation>
        <location evidence="5">Membrane</location>
        <topology evidence="5">Peripheral membrane protein</topology>
        <orientation evidence="5">Cytoplasmic side</orientation>
    </subcellularLocation>
    <subcellularLocation>
        <location evidence="5">Cytoplasmic vesicle membrane</location>
        <topology evidence="5">Peripheral membrane protein</topology>
        <orientation evidence="5">Cytoplasmic side</orientation>
    </subcellularLocation>
</comment>
<comment type="alternative products">
    <event type="alternative splicing"/>
    <isoform>
        <id>Q9NRS6-1</id>
        <name>1</name>
        <sequence type="displayed"/>
    </isoform>
    <isoform>
        <id>Q9NRS6-2</id>
        <name>2</name>
        <name>SNX15A</name>
        <sequence type="described" ref="VSP_006193"/>
    </isoform>
</comment>
<comment type="tissue specificity">
    <text evidence="5">Widely expressed.</text>
</comment>
<comment type="domain">
    <text evidence="1">The PX domain mediates interaction with membranes enriched in phosphatidylinositol 3-phosphate.</text>
</comment>
<comment type="similarity">
    <text evidence="7">Belongs to the sorting nexin family.</text>
</comment>
<dbReference type="EMBL" id="AF175267">
    <property type="protein sequence ID" value="AAF89955.1"/>
    <property type="molecule type" value="mRNA"/>
</dbReference>
<dbReference type="EMBL" id="AF175268">
    <property type="protein sequence ID" value="AAF89956.1"/>
    <property type="molecule type" value="mRNA"/>
</dbReference>
<dbReference type="EMBL" id="HQ205586">
    <property type="protein sequence ID" value="ADP91255.1"/>
    <property type="molecule type" value="Genomic_DNA"/>
</dbReference>
<dbReference type="EMBL" id="HQ205587">
    <property type="protein sequence ID" value="ADP91257.1"/>
    <property type="molecule type" value="Genomic_DNA"/>
</dbReference>
<dbReference type="EMBL" id="HQ205588">
    <property type="protein sequence ID" value="ADP91259.1"/>
    <property type="molecule type" value="Genomic_DNA"/>
</dbReference>
<dbReference type="EMBL" id="HQ205589">
    <property type="protein sequence ID" value="ADP91261.1"/>
    <property type="molecule type" value="Genomic_DNA"/>
</dbReference>
<dbReference type="EMBL" id="HQ205590">
    <property type="protein sequence ID" value="ADP91263.1"/>
    <property type="molecule type" value="Genomic_DNA"/>
</dbReference>
<dbReference type="EMBL" id="HQ205591">
    <property type="protein sequence ID" value="ADP91265.1"/>
    <property type="molecule type" value="Genomic_DNA"/>
</dbReference>
<dbReference type="EMBL" id="HQ205592">
    <property type="protein sequence ID" value="ADP91267.1"/>
    <property type="molecule type" value="Genomic_DNA"/>
</dbReference>
<dbReference type="EMBL" id="HQ205593">
    <property type="protein sequence ID" value="ADP91269.1"/>
    <property type="molecule type" value="Genomic_DNA"/>
</dbReference>
<dbReference type="EMBL" id="HQ205594">
    <property type="protein sequence ID" value="ADP91271.1"/>
    <property type="molecule type" value="Genomic_DNA"/>
</dbReference>
<dbReference type="EMBL" id="HQ205595">
    <property type="protein sequence ID" value="ADP91273.1"/>
    <property type="molecule type" value="Genomic_DNA"/>
</dbReference>
<dbReference type="EMBL" id="HQ205596">
    <property type="protein sequence ID" value="ADP91275.1"/>
    <property type="molecule type" value="Genomic_DNA"/>
</dbReference>
<dbReference type="EMBL" id="HQ205597">
    <property type="protein sequence ID" value="ADP91277.1"/>
    <property type="molecule type" value="Genomic_DNA"/>
</dbReference>
<dbReference type="EMBL" id="HQ205598">
    <property type="protein sequence ID" value="ADP91279.1"/>
    <property type="molecule type" value="Genomic_DNA"/>
</dbReference>
<dbReference type="EMBL" id="HQ205599">
    <property type="protein sequence ID" value="ADP91281.1"/>
    <property type="molecule type" value="Genomic_DNA"/>
</dbReference>
<dbReference type="EMBL" id="HQ205600">
    <property type="protein sequence ID" value="ADP91283.1"/>
    <property type="molecule type" value="Genomic_DNA"/>
</dbReference>
<dbReference type="EMBL" id="HQ205601">
    <property type="protein sequence ID" value="ADP91285.1"/>
    <property type="molecule type" value="Genomic_DNA"/>
</dbReference>
<dbReference type="EMBL" id="HQ205602">
    <property type="protein sequence ID" value="ADP91287.1"/>
    <property type="molecule type" value="Genomic_DNA"/>
</dbReference>
<dbReference type="EMBL" id="HQ205603">
    <property type="protein sequence ID" value="ADP91289.1"/>
    <property type="molecule type" value="Genomic_DNA"/>
</dbReference>
<dbReference type="EMBL" id="HQ205604">
    <property type="protein sequence ID" value="ADP91291.1"/>
    <property type="molecule type" value="Genomic_DNA"/>
</dbReference>
<dbReference type="EMBL" id="HQ205605">
    <property type="protein sequence ID" value="ADP91293.1"/>
    <property type="molecule type" value="Genomic_DNA"/>
</dbReference>
<dbReference type="EMBL" id="HQ205606">
    <property type="protein sequence ID" value="ADP91295.1"/>
    <property type="molecule type" value="Genomic_DNA"/>
</dbReference>
<dbReference type="EMBL" id="HQ205607">
    <property type="protein sequence ID" value="ADP91297.1"/>
    <property type="molecule type" value="Genomic_DNA"/>
</dbReference>
<dbReference type="EMBL" id="HQ205608">
    <property type="protein sequence ID" value="ADP91299.1"/>
    <property type="molecule type" value="Genomic_DNA"/>
</dbReference>
<dbReference type="EMBL" id="HQ205609">
    <property type="protein sequence ID" value="ADP91301.1"/>
    <property type="molecule type" value="Genomic_DNA"/>
</dbReference>
<dbReference type="EMBL" id="HQ205610">
    <property type="protein sequence ID" value="ADP91303.1"/>
    <property type="molecule type" value="Genomic_DNA"/>
</dbReference>
<dbReference type="EMBL" id="HQ205611">
    <property type="protein sequence ID" value="ADP91305.1"/>
    <property type="molecule type" value="Genomic_DNA"/>
</dbReference>
<dbReference type="EMBL" id="HQ205612">
    <property type="protein sequence ID" value="ADP91307.1"/>
    <property type="molecule type" value="Genomic_DNA"/>
</dbReference>
<dbReference type="EMBL" id="HQ205613">
    <property type="protein sequence ID" value="ADP91309.1"/>
    <property type="molecule type" value="Genomic_DNA"/>
</dbReference>
<dbReference type="EMBL" id="HQ205614">
    <property type="protein sequence ID" value="ADP91311.1"/>
    <property type="molecule type" value="Genomic_DNA"/>
</dbReference>
<dbReference type="EMBL" id="HQ205615">
    <property type="protein sequence ID" value="ADP91313.1"/>
    <property type="molecule type" value="Genomic_DNA"/>
</dbReference>
<dbReference type="EMBL" id="HQ205616">
    <property type="protein sequence ID" value="ADP91315.1"/>
    <property type="molecule type" value="Genomic_DNA"/>
</dbReference>
<dbReference type="EMBL" id="HQ205617">
    <property type="protein sequence ID" value="ADP91317.1"/>
    <property type="molecule type" value="Genomic_DNA"/>
</dbReference>
<dbReference type="EMBL" id="HQ205618">
    <property type="protein sequence ID" value="ADP91319.1"/>
    <property type="molecule type" value="Genomic_DNA"/>
</dbReference>
<dbReference type="EMBL" id="HQ205619">
    <property type="protein sequence ID" value="ADP91321.1"/>
    <property type="molecule type" value="Genomic_DNA"/>
</dbReference>
<dbReference type="EMBL" id="HQ205620">
    <property type="protein sequence ID" value="ADP91323.1"/>
    <property type="molecule type" value="Genomic_DNA"/>
</dbReference>
<dbReference type="EMBL" id="HQ205621">
    <property type="protein sequence ID" value="ADP91325.1"/>
    <property type="molecule type" value="Genomic_DNA"/>
</dbReference>
<dbReference type="EMBL" id="HQ205622">
    <property type="protein sequence ID" value="ADP91327.1"/>
    <property type="molecule type" value="Genomic_DNA"/>
</dbReference>
<dbReference type="EMBL" id="HQ205623">
    <property type="protein sequence ID" value="ADP91329.1"/>
    <property type="molecule type" value="Genomic_DNA"/>
</dbReference>
<dbReference type="EMBL" id="HQ205624">
    <property type="protein sequence ID" value="ADP91331.1"/>
    <property type="molecule type" value="Genomic_DNA"/>
</dbReference>
<dbReference type="EMBL" id="HQ205625">
    <property type="protein sequence ID" value="ADP91333.1"/>
    <property type="molecule type" value="Genomic_DNA"/>
</dbReference>
<dbReference type="EMBL" id="BT006631">
    <property type="protein sequence ID" value="AAP35277.1"/>
    <property type="molecule type" value="mRNA"/>
</dbReference>
<dbReference type="EMBL" id="AP000436">
    <property type="status" value="NOT_ANNOTATED_CDS"/>
    <property type="molecule type" value="Genomic_DNA"/>
</dbReference>
<dbReference type="EMBL" id="AP003068">
    <property type="status" value="NOT_ANNOTATED_CDS"/>
    <property type="molecule type" value="Genomic_DNA"/>
</dbReference>
<dbReference type="EMBL" id="BC009897">
    <property type="protein sequence ID" value="AAH09897.1"/>
    <property type="molecule type" value="mRNA"/>
</dbReference>
<dbReference type="EMBL" id="BC012767">
    <property type="protein sequence ID" value="AAH12767.1"/>
    <property type="molecule type" value="mRNA"/>
</dbReference>
<dbReference type="EMBL" id="BC014520">
    <property type="protein sequence ID" value="AAH14520.1"/>
    <property type="molecule type" value="mRNA"/>
</dbReference>
<dbReference type="CCDS" id="CCDS8089.1">
    <molecule id="Q9NRS6-1"/>
</dbReference>
<dbReference type="CCDS" id="CCDS8090.1">
    <molecule id="Q9NRS6-2"/>
</dbReference>
<dbReference type="RefSeq" id="NP_037438.2">
    <molecule id="Q9NRS6-1"/>
    <property type="nucleotide sequence ID" value="NM_013306.4"/>
</dbReference>
<dbReference type="RefSeq" id="NP_680086.2">
    <molecule id="Q9NRS6-2"/>
    <property type="nucleotide sequence ID" value="NM_147777.3"/>
</dbReference>
<dbReference type="PDB" id="6ECM">
    <property type="method" value="X-ray"/>
    <property type="resolution" value="2.35 A"/>
    <property type="chains" value="A=1-126"/>
</dbReference>
<dbReference type="PDB" id="6MBI">
    <property type="method" value="X-ray"/>
    <property type="resolution" value="2.83 A"/>
    <property type="chains" value="A=1-126"/>
</dbReference>
<dbReference type="PDBsum" id="6ECM"/>
<dbReference type="PDBsum" id="6MBI"/>
<dbReference type="SMR" id="Q9NRS6"/>
<dbReference type="BioGRID" id="118955">
    <property type="interactions" value="17"/>
</dbReference>
<dbReference type="FunCoup" id="Q9NRS6">
    <property type="interactions" value="973"/>
</dbReference>
<dbReference type="IntAct" id="Q9NRS6">
    <property type="interactions" value="11"/>
</dbReference>
<dbReference type="MINT" id="Q9NRS6"/>
<dbReference type="STRING" id="9606.ENSP00000366452"/>
<dbReference type="TCDB" id="3.A.34.1.1">
    <property type="family name" value="the sorting nexins of the escrt complexes (sn-escrt)"/>
</dbReference>
<dbReference type="GlyGen" id="Q9NRS6">
    <property type="glycosylation" value="1 site"/>
</dbReference>
<dbReference type="iPTMnet" id="Q9NRS6"/>
<dbReference type="PhosphoSitePlus" id="Q9NRS6"/>
<dbReference type="BioMuta" id="SNX15"/>
<dbReference type="DMDM" id="13124562"/>
<dbReference type="jPOST" id="Q9NRS6"/>
<dbReference type="MassIVE" id="Q9NRS6"/>
<dbReference type="PaxDb" id="9606-ENSP00000366452"/>
<dbReference type="PeptideAtlas" id="Q9NRS6"/>
<dbReference type="ProteomicsDB" id="15302"/>
<dbReference type="ProteomicsDB" id="82421">
    <molecule id="Q9NRS6-1"/>
</dbReference>
<dbReference type="ProteomicsDB" id="82422">
    <molecule id="Q9NRS6-2"/>
</dbReference>
<dbReference type="Pumba" id="Q9NRS6"/>
<dbReference type="Antibodypedia" id="29586">
    <property type="antibodies" value="231 antibodies from 29 providers"/>
</dbReference>
<dbReference type="DNASU" id="29907"/>
<dbReference type="Ensembl" id="ENST00000352068.5">
    <molecule id="Q9NRS6-2"/>
    <property type="protein sequence ID" value="ENSP00000316410.5"/>
    <property type="gene ID" value="ENSG00000110025.13"/>
</dbReference>
<dbReference type="Ensembl" id="ENST00000377244.8">
    <molecule id="Q9NRS6-1"/>
    <property type="protein sequence ID" value="ENSP00000366452.3"/>
    <property type="gene ID" value="ENSG00000110025.13"/>
</dbReference>
<dbReference type="GeneID" id="29907"/>
<dbReference type="KEGG" id="hsa:29907"/>
<dbReference type="MANE-Select" id="ENST00000377244.8">
    <property type="protein sequence ID" value="ENSP00000366452.3"/>
    <property type="RefSeq nucleotide sequence ID" value="NM_013306.5"/>
    <property type="RefSeq protein sequence ID" value="NP_037438.2"/>
</dbReference>
<dbReference type="UCSC" id="uc001ock.4">
    <molecule id="Q9NRS6-1"/>
    <property type="organism name" value="human"/>
</dbReference>
<dbReference type="AGR" id="HGNC:14978"/>
<dbReference type="CTD" id="29907"/>
<dbReference type="DisGeNET" id="29907"/>
<dbReference type="GeneCards" id="SNX15"/>
<dbReference type="HGNC" id="HGNC:14978">
    <property type="gene designation" value="SNX15"/>
</dbReference>
<dbReference type="HPA" id="ENSG00000110025">
    <property type="expression patterns" value="Low tissue specificity"/>
</dbReference>
<dbReference type="MIM" id="605964">
    <property type="type" value="gene"/>
</dbReference>
<dbReference type="neXtProt" id="NX_Q9NRS6"/>
<dbReference type="OpenTargets" id="ENSG00000110025"/>
<dbReference type="PharmGKB" id="PA37953"/>
<dbReference type="VEuPathDB" id="HostDB:ENSG00000110025"/>
<dbReference type="eggNOG" id="KOG0603">
    <property type="taxonomic scope" value="Eukaryota"/>
</dbReference>
<dbReference type="eggNOG" id="KOG2101">
    <property type="taxonomic scope" value="Eukaryota"/>
</dbReference>
<dbReference type="GeneTree" id="ENSGT00940000160125"/>
<dbReference type="InParanoid" id="Q9NRS6"/>
<dbReference type="OMA" id="EMLVDQH"/>
<dbReference type="OrthoDB" id="1278353at2759"/>
<dbReference type="PAN-GO" id="Q9NRS6">
    <property type="GO annotations" value="1 GO annotation based on evolutionary models"/>
</dbReference>
<dbReference type="PhylomeDB" id="Q9NRS6"/>
<dbReference type="TreeFam" id="TF323964"/>
<dbReference type="PathwayCommons" id="Q9NRS6"/>
<dbReference type="SignaLink" id="Q9NRS6"/>
<dbReference type="BioGRID-ORCS" id="29907">
    <property type="hits" value="24 hits in 1159 CRISPR screens"/>
</dbReference>
<dbReference type="GeneWiki" id="SNX15"/>
<dbReference type="GenomeRNAi" id="29907"/>
<dbReference type="Pharos" id="Q9NRS6">
    <property type="development level" value="Tbio"/>
</dbReference>
<dbReference type="PRO" id="PR:Q9NRS6"/>
<dbReference type="Proteomes" id="UP000005640">
    <property type="component" value="Chromosome 11"/>
</dbReference>
<dbReference type="RNAct" id="Q9NRS6">
    <property type="molecule type" value="protein"/>
</dbReference>
<dbReference type="Bgee" id="ENSG00000110025">
    <property type="expression patterns" value="Expressed in bone marrow cell and 101 other cell types or tissues"/>
</dbReference>
<dbReference type="ExpressionAtlas" id="Q9NRS6">
    <property type="expression patterns" value="baseline and differential"/>
</dbReference>
<dbReference type="GO" id="GO:0030659">
    <property type="term" value="C:cytoplasmic vesicle membrane"/>
    <property type="evidence" value="ECO:0007669"/>
    <property type="project" value="UniProtKB-SubCell"/>
</dbReference>
<dbReference type="GO" id="GO:0005829">
    <property type="term" value="C:cytosol"/>
    <property type="evidence" value="ECO:0000314"/>
    <property type="project" value="HPA"/>
</dbReference>
<dbReference type="GO" id="GO:0043231">
    <property type="term" value="C:intracellular membrane-bounded organelle"/>
    <property type="evidence" value="ECO:0000314"/>
    <property type="project" value="HPA"/>
</dbReference>
<dbReference type="GO" id="GO:0016020">
    <property type="term" value="C:membrane"/>
    <property type="evidence" value="ECO:0000303"/>
    <property type="project" value="UniProtKB"/>
</dbReference>
<dbReference type="GO" id="GO:0005730">
    <property type="term" value="C:nucleolus"/>
    <property type="evidence" value="ECO:0000314"/>
    <property type="project" value="HPA"/>
</dbReference>
<dbReference type="GO" id="GO:0005886">
    <property type="term" value="C:plasma membrane"/>
    <property type="evidence" value="ECO:0000314"/>
    <property type="project" value="HPA"/>
</dbReference>
<dbReference type="GO" id="GO:0035091">
    <property type="term" value="F:phosphatidylinositol binding"/>
    <property type="evidence" value="ECO:0007669"/>
    <property type="project" value="InterPro"/>
</dbReference>
<dbReference type="GO" id="GO:0006886">
    <property type="term" value="P:intracellular protein transport"/>
    <property type="evidence" value="ECO:0000303"/>
    <property type="project" value="UniProtKB"/>
</dbReference>
<dbReference type="CDD" id="cd02677">
    <property type="entry name" value="MIT_SNX15"/>
    <property type="match status" value="1"/>
</dbReference>
<dbReference type="FunFam" id="1.20.58.80:FF:000017">
    <property type="entry name" value="sorting nexin-15 isoform X1"/>
    <property type="match status" value="1"/>
</dbReference>
<dbReference type="FunFam" id="3.30.1520.10:FF:000029">
    <property type="entry name" value="sorting nexin-15 isoform X1"/>
    <property type="match status" value="1"/>
</dbReference>
<dbReference type="Gene3D" id="1.20.58.80">
    <property type="entry name" value="Phosphotransferase system, lactose/cellobiose-type IIA subunit"/>
    <property type="match status" value="1"/>
</dbReference>
<dbReference type="Gene3D" id="3.30.1520.10">
    <property type="entry name" value="Phox-like domain"/>
    <property type="match status" value="1"/>
</dbReference>
<dbReference type="InterPro" id="IPR051866">
    <property type="entry name" value="Intracell_Sig-Traffick_Protein"/>
</dbReference>
<dbReference type="InterPro" id="IPR007330">
    <property type="entry name" value="MIT_dom"/>
</dbReference>
<dbReference type="InterPro" id="IPR036181">
    <property type="entry name" value="MIT_dom_sf"/>
</dbReference>
<dbReference type="InterPro" id="IPR001683">
    <property type="entry name" value="PX_dom"/>
</dbReference>
<dbReference type="InterPro" id="IPR036871">
    <property type="entry name" value="PX_dom_sf"/>
</dbReference>
<dbReference type="PANTHER" id="PTHR15508">
    <property type="entry name" value="RIBOSOMAL PROTEIN S6 KINASE"/>
    <property type="match status" value="1"/>
</dbReference>
<dbReference type="PANTHER" id="PTHR15508:SF9">
    <property type="entry name" value="SORTING NEXIN-15"/>
    <property type="match status" value="1"/>
</dbReference>
<dbReference type="Pfam" id="PF04212">
    <property type="entry name" value="MIT"/>
    <property type="match status" value="1"/>
</dbReference>
<dbReference type="Pfam" id="PF00787">
    <property type="entry name" value="PX"/>
    <property type="match status" value="1"/>
</dbReference>
<dbReference type="SMART" id="SM00745">
    <property type="entry name" value="MIT"/>
    <property type="match status" value="1"/>
</dbReference>
<dbReference type="SMART" id="SM00312">
    <property type="entry name" value="PX"/>
    <property type="match status" value="1"/>
</dbReference>
<dbReference type="SUPFAM" id="SSF116846">
    <property type="entry name" value="MIT domain"/>
    <property type="match status" value="1"/>
</dbReference>
<dbReference type="SUPFAM" id="SSF64268">
    <property type="entry name" value="PX domain"/>
    <property type="match status" value="1"/>
</dbReference>
<dbReference type="PROSITE" id="PS50195">
    <property type="entry name" value="PX"/>
    <property type="match status" value="1"/>
</dbReference>
<reference key="1">
    <citation type="journal article" date="2001" name="J. Biol. Chem.">
        <title>Identification and characterization of snx15, a novel sorting nexin involved in protein trafficking.</title>
        <authorList>
            <person name="Phillips S.A."/>
            <person name="Barr V.A."/>
            <person name="Haft D.H."/>
            <person name="Taylor S.I."/>
            <person name="Haft C.R."/>
        </authorList>
    </citation>
    <scope>NUCLEOTIDE SEQUENCE [MRNA] (ISOFORMS 1 AND 2)</scope>
    <scope>SUBCELLULAR LOCATION</scope>
    <scope>FUNCTION</scope>
    <scope>SUBUNIT</scope>
    <scope>TISSUE SPECIFICITY</scope>
    <source>
        <tissue>Parathyroid</tissue>
    </source>
</reference>
<reference key="2">
    <citation type="journal article" date="2011" name="Nucleic Acids Res.">
        <title>Identification of rare DNA variants in mitochondrial disorders with improved array-based sequencing.</title>
        <authorList>
            <person name="Wang W."/>
            <person name="Shen P."/>
            <person name="Thiyagarajan S."/>
            <person name="Lin S."/>
            <person name="Palm C."/>
            <person name="Horvath R."/>
            <person name="Klopstock T."/>
            <person name="Cutler D."/>
            <person name="Pique L."/>
            <person name="Schrijver I."/>
            <person name="Davis R.W."/>
            <person name="Mindrinos M."/>
            <person name="Speed T.P."/>
            <person name="Scharfe C."/>
        </authorList>
    </citation>
    <scope>NUCLEOTIDE SEQUENCE [GENOMIC DNA]</scope>
    <scope>ALTERNATIVE SPLICING (ISOFORM 2)</scope>
</reference>
<reference key="3">
    <citation type="submission" date="2003-05" db="EMBL/GenBank/DDBJ databases">
        <title>Cloning of human full-length CDSs in BD Creator(TM) system donor vector.</title>
        <authorList>
            <person name="Kalnine N."/>
            <person name="Chen X."/>
            <person name="Rolfs A."/>
            <person name="Halleck A."/>
            <person name="Hines L."/>
            <person name="Eisenstein S."/>
            <person name="Koundinya M."/>
            <person name="Raphael J."/>
            <person name="Moreira D."/>
            <person name="Kelley T."/>
            <person name="LaBaer J."/>
            <person name="Lin Y."/>
            <person name="Phelan M."/>
            <person name="Farmer A."/>
        </authorList>
    </citation>
    <scope>NUCLEOTIDE SEQUENCE [LARGE SCALE MRNA] (ISOFORM 1)</scope>
</reference>
<reference key="4">
    <citation type="journal article" date="2006" name="Nature">
        <title>Human chromosome 11 DNA sequence and analysis including novel gene identification.</title>
        <authorList>
            <person name="Taylor T.D."/>
            <person name="Noguchi H."/>
            <person name="Totoki Y."/>
            <person name="Toyoda A."/>
            <person name="Kuroki Y."/>
            <person name="Dewar K."/>
            <person name="Lloyd C."/>
            <person name="Itoh T."/>
            <person name="Takeda T."/>
            <person name="Kim D.-W."/>
            <person name="She X."/>
            <person name="Barlow K.F."/>
            <person name="Bloom T."/>
            <person name="Bruford E."/>
            <person name="Chang J.L."/>
            <person name="Cuomo C.A."/>
            <person name="Eichler E."/>
            <person name="FitzGerald M.G."/>
            <person name="Jaffe D.B."/>
            <person name="LaButti K."/>
            <person name="Nicol R."/>
            <person name="Park H.-S."/>
            <person name="Seaman C."/>
            <person name="Sougnez C."/>
            <person name="Yang X."/>
            <person name="Zimmer A.R."/>
            <person name="Zody M.C."/>
            <person name="Birren B.W."/>
            <person name="Nusbaum C."/>
            <person name="Fujiyama A."/>
            <person name="Hattori M."/>
            <person name="Rogers J."/>
            <person name="Lander E.S."/>
            <person name="Sakaki Y."/>
        </authorList>
    </citation>
    <scope>NUCLEOTIDE SEQUENCE [LARGE SCALE GENOMIC DNA]</scope>
</reference>
<reference key="5">
    <citation type="journal article" date="2004" name="Genome Res.">
        <title>The status, quality, and expansion of the NIH full-length cDNA project: the Mammalian Gene Collection (MGC).</title>
        <authorList>
            <consortium name="The MGC Project Team"/>
        </authorList>
    </citation>
    <scope>NUCLEOTIDE SEQUENCE [LARGE SCALE MRNA] (ISOFORM 1)</scope>
    <source>
        <tissue>Brain</tissue>
        <tissue>Lymph</tissue>
    </source>
</reference>
<reference key="6">
    <citation type="journal article" date="2008" name="Proc. Natl. Acad. Sci. U.S.A.">
        <title>A quantitative atlas of mitotic phosphorylation.</title>
        <authorList>
            <person name="Dephoure N."/>
            <person name="Zhou C."/>
            <person name="Villen J."/>
            <person name="Beausoleil S.A."/>
            <person name="Bakalarski C.E."/>
            <person name="Elledge S.J."/>
            <person name="Gygi S.P."/>
        </authorList>
    </citation>
    <scope>IDENTIFICATION BY MASS SPECTROMETRY [LARGE SCALE ANALYSIS]</scope>
    <source>
        <tissue>Cervix carcinoma</tissue>
    </source>
</reference>
<reference key="7">
    <citation type="journal article" date="2009" name="Sci. Signal.">
        <title>Quantitative phosphoproteomic analysis of T cell receptor signaling reveals system-wide modulation of protein-protein interactions.</title>
        <authorList>
            <person name="Mayya V."/>
            <person name="Lundgren D.H."/>
            <person name="Hwang S.-I."/>
            <person name="Rezaul K."/>
            <person name="Wu L."/>
            <person name="Eng J.K."/>
            <person name="Rodionov V."/>
            <person name="Han D.K."/>
        </authorList>
    </citation>
    <scope>PHOSPHORYLATION [LARGE SCALE ANALYSIS] AT SER-227</scope>
    <scope>IDENTIFICATION BY MASS SPECTROMETRY [LARGE SCALE ANALYSIS]</scope>
    <source>
        <tissue>Leukemic T-cell</tissue>
    </source>
</reference>
<reference key="8">
    <citation type="journal article" date="2011" name="BMC Syst. Biol.">
        <title>Initial characterization of the human central proteome.</title>
        <authorList>
            <person name="Burkard T.R."/>
            <person name="Planyavsky M."/>
            <person name="Kaupe I."/>
            <person name="Breitwieser F.P."/>
            <person name="Buerckstuemmer T."/>
            <person name="Bennett K.L."/>
            <person name="Superti-Furga G."/>
            <person name="Colinge J."/>
        </authorList>
    </citation>
    <scope>IDENTIFICATION BY MASS SPECTROMETRY [LARGE SCALE ANALYSIS]</scope>
</reference>
<reference key="9">
    <citation type="journal article" date="2013" name="J. Proteome Res.">
        <title>Toward a comprehensive characterization of a human cancer cell phosphoproteome.</title>
        <authorList>
            <person name="Zhou H."/>
            <person name="Di Palma S."/>
            <person name="Preisinger C."/>
            <person name="Peng M."/>
            <person name="Polat A.N."/>
            <person name="Heck A.J."/>
            <person name="Mohammed S."/>
        </authorList>
    </citation>
    <scope>IDENTIFICATION BY MASS SPECTROMETRY [LARGE SCALE ANALYSIS]</scope>
    <source>
        <tissue>Erythroleukemia</tissue>
    </source>
</reference>
<reference key="10">
    <citation type="journal article" date="2014" name="J. Proteomics">
        <title>An enzyme assisted RP-RPLC approach for in-depth analysis of human liver phosphoproteome.</title>
        <authorList>
            <person name="Bian Y."/>
            <person name="Song C."/>
            <person name="Cheng K."/>
            <person name="Dong M."/>
            <person name="Wang F."/>
            <person name="Huang J."/>
            <person name="Sun D."/>
            <person name="Wang L."/>
            <person name="Ye M."/>
            <person name="Zou H."/>
        </authorList>
    </citation>
    <scope>PHOSPHORYLATION [LARGE SCALE ANALYSIS] AT SER-201 AND SER-227</scope>
    <scope>IDENTIFICATION BY MASS SPECTROMETRY [LARGE SCALE ANALYSIS]</scope>
    <source>
        <tissue>Liver</tissue>
    </source>
</reference>
<protein>
    <recommendedName>
        <fullName>Sorting nexin-15</fullName>
    </recommendedName>
</protein>
<name>SNX15_HUMAN</name>
<accession>Q9NRS6</accession>
<accession>E5KQS6</accession>
<accession>Q9NRS5</accession>
<sequence>MSRQAKDDFLRHYTVSDPRTHPKGYTEYKVTAQFISKKDPEDVKEVVVWKRYSDFRKLHGDLAYTHRNLFRRLEEFPAFPRAQVFGRFEASVIEERRKGAEDLLRFTVHIPALNNSPQLKEFFRGGEVTRPLEVSRDLHILPPPLIPTPPPDDPRLSQLLPAERRGLEELEVPVDPPPSSPAQEALDLLFNCESTEEASGSPARGPLTEAELALFDPFSKEEGAAPSPTHVAELATMEVESARLDQEPWEPGGQEEEEDGEGGPTPAYLSQATELITQALRDEKAGAYAAALQGYRDGVHVLLQGVPSDPLPARQEGVKKKAAEYLKRAEEILRLHLSQLPP</sequence>
<gene>
    <name type="primary">SNX15</name>
</gene>